<proteinExistence type="inferred from homology"/>
<dbReference type="EMBL" id="AP006715">
    <property type="protein sequence ID" value="BAE92400.1"/>
    <property type="molecule type" value="Genomic_DNA"/>
</dbReference>
<dbReference type="RefSeq" id="YP_536957.1">
    <property type="nucleotide sequence ID" value="NC_007932.1"/>
</dbReference>
<dbReference type="SMR" id="Q1XDL1"/>
<dbReference type="GO" id="GO:0009535">
    <property type="term" value="C:chloroplast thylakoid membrane"/>
    <property type="evidence" value="ECO:0007669"/>
    <property type="project" value="UniProtKB-SubCell"/>
</dbReference>
<dbReference type="GO" id="GO:0009512">
    <property type="term" value="C:cytochrome b6f complex"/>
    <property type="evidence" value="ECO:0007669"/>
    <property type="project" value="InterPro"/>
</dbReference>
<dbReference type="GO" id="GO:0009055">
    <property type="term" value="F:electron transfer activity"/>
    <property type="evidence" value="ECO:0007669"/>
    <property type="project" value="UniProtKB-UniRule"/>
</dbReference>
<dbReference type="GO" id="GO:0015979">
    <property type="term" value="P:photosynthesis"/>
    <property type="evidence" value="ECO:0007669"/>
    <property type="project" value="UniProtKB-KW"/>
</dbReference>
<dbReference type="HAMAP" id="MF_00396">
    <property type="entry name" value="Cytb6_f_PetM"/>
    <property type="match status" value="1"/>
</dbReference>
<dbReference type="InterPro" id="IPR012595">
    <property type="entry name" value="PetM_cyt_b6/f_cplx_su7"/>
</dbReference>
<dbReference type="Pfam" id="PF08041">
    <property type="entry name" value="PetM"/>
    <property type="match status" value="1"/>
</dbReference>
<dbReference type="SUPFAM" id="SSF103441">
    <property type="entry name" value="PetM subunit of the cytochrome b6f complex"/>
    <property type="match status" value="1"/>
</dbReference>
<feature type="chain" id="PRO_0000275538" description="Cytochrome b6-f complex subunit 7">
    <location>
        <begin position="1"/>
        <end position="32"/>
    </location>
</feature>
<feature type="transmembrane region" description="Helical" evidence="1">
    <location>
        <begin position="9"/>
        <end position="27"/>
    </location>
</feature>
<gene>
    <name evidence="1" type="primary">petM</name>
</gene>
<geneLocation type="chloroplast"/>
<name>PETM_PYRYE</name>
<accession>Q1XDL1</accession>
<comment type="function">
    <text evidence="1">Component of the cytochrome b6-f complex, which mediates electron transfer between photosystem II (PSII) and photosystem I (PSI), cyclic electron flow around PSI, and state transitions.</text>
</comment>
<comment type="subunit">
    <text evidence="1">The 4 large subunits of the cytochrome b6-f complex are cytochrome b6, subunit IV (17 kDa polypeptide, PetD), cytochrome f and the Rieske protein, while the 4 small subunits are PetG, PetL, PetM and PetN. The complex functions as a dimer.</text>
</comment>
<comment type="subcellular location">
    <subcellularLocation>
        <location>Plastid</location>
        <location>Chloroplast thylakoid membrane</location>
        <topology>Single-pass membrane protein</topology>
    </subcellularLocation>
</comment>
<comment type="similarity">
    <text evidence="1">Belongs to the PetM family.</text>
</comment>
<reference key="1">
    <citation type="submission" date="2003-11" db="EMBL/GenBank/DDBJ databases">
        <title>Whole genome sequence of Porphyra yezoensis chloroplast.</title>
        <authorList>
            <person name="Kunimoto M."/>
            <person name="Morishima K."/>
            <person name="Yoshikawa M."/>
            <person name="Fukuda S."/>
            <person name="Kobayashi T."/>
            <person name="Kobayashi M."/>
            <person name="Okazaki T."/>
            <person name="Ohara I."/>
            <person name="Nakayama I."/>
        </authorList>
    </citation>
    <scope>NUCLEOTIDE SEQUENCE [LARGE SCALE GENOMIC DNA]</scope>
    <source>
        <strain>U-51</strain>
    </source>
</reference>
<sequence length="32" mass="3284">MVGEIVESAVLSSVLVLVGLAIGFLLLKVQGE</sequence>
<evidence type="ECO:0000255" key="1">
    <source>
        <dbReference type="HAMAP-Rule" id="MF_00396"/>
    </source>
</evidence>
<protein>
    <recommendedName>
        <fullName evidence="1">Cytochrome b6-f complex subunit 7</fullName>
    </recommendedName>
    <alternativeName>
        <fullName evidence="1">Cytochrome b6-f complex subunit PetM</fullName>
    </alternativeName>
    <alternativeName>
        <fullName evidence="1">Cytochrome b6-f complex subunit VII</fullName>
    </alternativeName>
</protein>
<keyword id="KW-0150">Chloroplast</keyword>
<keyword id="KW-0249">Electron transport</keyword>
<keyword id="KW-0472">Membrane</keyword>
<keyword id="KW-0602">Photosynthesis</keyword>
<keyword id="KW-0934">Plastid</keyword>
<keyword id="KW-0793">Thylakoid</keyword>
<keyword id="KW-0812">Transmembrane</keyword>
<keyword id="KW-1133">Transmembrane helix</keyword>
<keyword id="KW-0813">Transport</keyword>
<organism>
    <name type="scientific">Pyropia yezoensis</name>
    <name type="common">Susabi-nori</name>
    <name type="synonym">Porphyra yezoensis</name>
    <dbReference type="NCBI Taxonomy" id="2788"/>
    <lineage>
        <taxon>Eukaryota</taxon>
        <taxon>Rhodophyta</taxon>
        <taxon>Bangiophyceae</taxon>
        <taxon>Bangiales</taxon>
        <taxon>Bangiaceae</taxon>
        <taxon>Pyropia</taxon>
    </lineage>
</organism>